<organism>
    <name type="scientific">Rhodopseudomonas palustris (strain BisB5)</name>
    <dbReference type="NCBI Taxonomy" id="316057"/>
    <lineage>
        <taxon>Bacteria</taxon>
        <taxon>Pseudomonadati</taxon>
        <taxon>Pseudomonadota</taxon>
        <taxon>Alphaproteobacteria</taxon>
        <taxon>Hyphomicrobiales</taxon>
        <taxon>Nitrobacteraceae</taxon>
        <taxon>Rhodopseudomonas</taxon>
    </lineage>
</organism>
<name>PYRF_RHOPS</name>
<accession>Q13E64</accession>
<proteinExistence type="inferred from homology"/>
<dbReference type="EC" id="4.1.1.23" evidence="1"/>
<dbReference type="EMBL" id="CP000283">
    <property type="protein sequence ID" value="ABE37625.1"/>
    <property type="molecule type" value="Genomic_DNA"/>
</dbReference>
<dbReference type="SMR" id="Q13E64"/>
<dbReference type="STRING" id="316057.RPD_0387"/>
<dbReference type="KEGG" id="rpd:RPD_0387"/>
<dbReference type="eggNOG" id="COG0284">
    <property type="taxonomic scope" value="Bacteria"/>
</dbReference>
<dbReference type="HOGENOM" id="CLU_067069_1_0_5"/>
<dbReference type="BioCyc" id="RPAL316057:RPD_RS01995-MONOMER"/>
<dbReference type="UniPathway" id="UPA00070">
    <property type="reaction ID" value="UER00120"/>
</dbReference>
<dbReference type="Proteomes" id="UP000001818">
    <property type="component" value="Chromosome"/>
</dbReference>
<dbReference type="GO" id="GO:0005829">
    <property type="term" value="C:cytosol"/>
    <property type="evidence" value="ECO:0007669"/>
    <property type="project" value="TreeGrafter"/>
</dbReference>
<dbReference type="GO" id="GO:0004590">
    <property type="term" value="F:orotidine-5'-phosphate decarboxylase activity"/>
    <property type="evidence" value="ECO:0007669"/>
    <property type="project" value="UniProtKB-UniRule"/>
</dbReference>
<dbReference type="GO" id="GO:0006207">
    <property type="term" value="P:'de novo' pyrimidine nucleobase biosynthetic process"/>
    <property type="evidence" value="ECO:0007669"/>
    <property type="project" value="InterPro"/>
</dbReference>
<dbReference type="GO" id="GO:0044205">
    <property type="term" value="P:'de novo' UMP biosynthetic process"/>
    <property type="evidence" value="ECO:0007669"/>
    <property type="project" value="UniProtKB-UniRule"/>
</dbReference>
<dbReference type="CDD" id="cd04725">
    <property type="entry name" value="OMP_decarboxylase_like"/>
    <property type="match status" value="1"/>
</dbReference>
<dbReference type="Gene3D" id="3.20.20.70">
    <property type="entry name" value="Aldolase class I"/>
    <property type="match status" value="1"/>
</dbReference>
<dbReference type="HAMAP" id="MF_01200_B">
    <property type="entry name" value="OMPdecase_type1_B"/>
    <property type="match status" value="1"/>
</dbReference>
<dbReference type="InterPro" id="IPR013785">
    <property type="entry name" value="Aldolase_TIM"/>
</dbReference>
<dbReference type="InterPro" id="IPR014732">
    <property type="entry name" value="OMPdecase"/>
</dbReference>
<dbReference type="InterPro" id="IPR018089">
    <property type="entry name" value="OMPdecase_AS"/>
</dbReference>
<dbReference type="InterPro" id="IPR047596">
    <property type="entry name" value="OMPdecase_bac"/>
</dbReference>
<dbReference type="InterPro" id="IPR001754">
    <property type="entry name" value="OMPdeCOase_dom"/>
</dbReference>
<dbReference type="InterPro" id="IPR011060">
    <property type="entry name" value="RibuloseP-bd_barrel"/>
</dbReference>
<dbReference type="NCBIfam" id="NF001273">
    <property type="entry name" value="PRK00230.1"/>
    <property type="match status" value="1"/>
</dbReference>
<dbReference type="NCBIfam" id="TIGR01740">
    <property type="entry name" value="pyrF"/>
    <property type="match status" value="1"/>
</dbReference>
<dbReference type="PANTHER" id="PTHR32119">
    <property type="entry name" value="OROTIDINE 5'-PHOSPHATE DECARBOXYLASE"/>
    <property type="match status" value="1"/>
</dbReference>
<dbReference type="PANTHER" id="PTHR32119:SF2">
    <property type="entry name" value="OROTIDINE 5'-PHOSPHATE DECARBOXYLASE"/>
    <property type="match status" value="1"/>
</dbReference>
<dbReference type="Pfam" id="PF00215">
    <property type="entry name" value="OMPdecase"/>
    <property type="match status" value="1"/>
</dbReference>
<dbReference type="SMART" id="SM00934">
    <property type="entry name" value="OMPdecase"/>
    <property type="match status" value="1"/>
</dbReference>
<dbReference type="SUPFAM" id="SSF51366">
    <property type="entry name" value="Ribulose-phoshate binding barrel"/>
    <property type="match status" value="1"/>
</dbReference>
<dbReference type="PROSITE" id="PS00156">
    <property type="entry name" value="OMPDECASE"/>
    <property type="match status" value="1"/>
</dbReference>
<comment type="function">
    <text evidence="1">Catalyzes the decarboxylation of orotidine 5'-monophosphate (OMP) to uridine 5'-monophosphate (UMP).</text>
</comment>
<comment type="catalytic activity">
    <reaction evidence="1">
        <text>orotidine 5'-phosphate + H(+) = UMP + CO2</text>
        <dbReference type="Rhea" id="RHEA:11596"/>
        <dbReference type="ChEBI" id="CHEBI:15378"/>
        <dbReference type="ChEBI" id="CHEBI:16526"/>
        <dbReference type="ChEBI" id="CHEBI:57538"/>
        <dbReference type="ChEBI" id="CHEBI:57865"/>
        <dbReference type="EC" id="4.1.1.23"/>
    </reaction>
</comment>
<comment type="pathway">
    <text evidence="1">Pyrimidine metabolism; UMP biosynthesis via de novo pathway; UMP from orotate: step 2/2.</text>
</comment>
<comment type="subunit">
    <text evidence="1">Homodimer.</text>
</comment>
<comment type="similarity">
    <text evidence="1">Belongs to the OMP decarboxylase family. Type 1 subfamily.</text>
</comment>
<feature type="chain" id="PRO_1000065939" description="Orotidine 5'-phosphate decarboxylase">
    <location>
        <begin position="1"/>
        <end position="235"/>
    </location>
</feature>
<feature type="active site" description="Proton donor" evidence="1">
    <location>
        <position position="68"/>
    </location>
</feature>
<feature type="binding site" evidence="1">
    <location>
        <position position="17"/>
    </location>
    <ligand>
        <name>substrate</name>
    </ligand>
</feature>
<feature type="binding site" evidence="1">
    <location>
        <position position="39"/>
    </location>
    <ligand>
        <name>substrate</name>
    </ligand>
</feature>
<feature type="binding site" evidence="1">
    <location>
        <begin position="66"/>
        <end position="75"/>
    </location>
    <ligand>
        <name>substrate</name>
    </ligand>
</feature>
<feature type="binding site" evidence="1">
    <location>
        <position position="121"/>
    </location>
    <ligand>
        <name>substrate</name>
    </ligand>
</feature>
<feature type="binding site" evidence="1">
    <location>
        <position position="182"/>
    </location>
    <ligand>
        <name>substrate</name>
    </ligand>
</feature>
<feature type="binding site" evidence="1">
    <location>
        <position position="191"/>
    </location>
    <ligand>
        <name>substrate</name>
    </ligand>
</feature>
<feature type="binding site" evidence="1">
    <location>
        <position position="211"/>
    </location>
    <ligand>
        <name>substrate</name>
    </ligand>
</feature>
<feature type="binding site" evidence="1">
    <location>
        <position position="212"/>
    </location>
    <ligand>
        <name>substrate</name>
    </ligand>
</feature>
<reference key="1">
    <citation type="submission" date="2006-03" db="EMBL/GenBank/DDBJ databases">
        <title>Complete sequence of Rhodopseudomonas palustris BisB5.</title>
        <authorList>
            <consortium name="US DOE Joint Genome Institute"/>
            <person name="Copeland A."/>
            <person name="Lucas S."/>
            <person name="Lapidus A."/>
            <person name="Barry K."/>
            <person name="Detter J.C."/>
            <person name="Glavina del Rio T."/>
            <person name="Hammon N."/>
            <person name="Israni S."/>
            <person name="Dalin E."/>
            <person name="Tice H."/>
            <person name="Pitluck S."/>
            <person name="Chain P."/>
            <person name="Malfatti S."/>
            <person name="Shin M."/>
            <person name="Vergez L."/>
            <person name="Schmutz J."/>
            <person name="Larimer F."/>
            <person name="Land M."/>
            <person name="Hauser L."/>
            <person name="Pelletier D.A."/>
            <person name="Kyrpides N."/>
            <person name="Lykidis A."/>
            <person name="Oda Y."/>
            <person name="Harwood C.S."/>
            <person name="Richardson P."/>
        </authorList>
    </citation>
    <scope>NUCLEOTIDE SEQUENCE [LARGE SCALE GENOMIC DNA]</scope>
    <source>
        <strain>BisB5</strain>
    </source>
</reference>
<sequence>MAQADPADRDRLIVALDVPSVDAANAMIEKLGDSVGFYKIGYQLAYAGGLPLVEKLARAGKKVFVDLKLHDIGNTVARGVESLNSLGATFLTVHAYPQTMKAAVAARGDSGLKILAVTVLTSYDDSDLADAGYRFGVRDLVEARARQALAIGVDGLVCSPEEAANLRGIVGPDMALVTPGIRPAGAAAGDQKRIMTPARAIAAGASHLVVGRPVMEAADPKQAAEAIVAEIAQAT</sequence>
<gene>
    <name evidence="1" type="primary">pyrF</name>
    <name type="ordered locus">RPD_0387</name>
</gene>
<keyword id="KW-0210">Decarboxylase</keyword>
<keyword id="KW-0456">Lyase</keyword>
<keyword id="KW-0665">Pyrimidine biosynthesis</keyword>
<evidence type="ECO:0000255" key="1">
    <source>
        <dbReference type="HAMAP-Rule" id="MF_01200"/>
    </source>
</evidence>
<protein>
    <recommendedName>
        <fullName evidence="1">Orotidine 5'-phosphate decarboxylase</fullName>
        <ecNumber evidence="1">4.1.1.23</ecNumber>
    </recommendedName>
    <alternativeName>
        <fullName evidence="1">OMP decarboxylase</fullName>
        <shortName evidence="1">OMPDCase</shortName>
        <shortName evidence="1">OMPdecase</shortName>
    </alternativeName>
</protein>